<dbReference type="EC" id="2.4.1.25"/>
<dbReference type="EMBL" id="AE000516">
    <property type="protein sequence ID" value="AAK46101.1"/>
    <property type="molecule type" value="Genomic_DNA"/>
</dbReference>
<dbReference type="PIR" id="G70928">
    <property type="entry name" value="G70928"/>
</dbReference>
<dbReference type="RefSeq" id="WP_003408795.1">
    <property type="nucleotide sequence ID" value="NZ_KK341227.1"/>
</dbReference>
<dbReference type="SMR" id="P9WK22"/>
<dbReference type="CAZy" id="GH77">
    <property type="family name" value="Glycoside Hydrolase Family 77"/>
</dbReference>
<dbReference type="GeneID" id="45425759"/>
<dbReference type="KEGG" id="mtc:MT1831"/>
<dbReference type="PATRIC" id="fig|83331.31.peg.1972"/>
<dbReference type="HOGENOM" id="CLU_022072_1_0_11"/>
<dbReference type="Proteomes" id="UP000001020">
    <property type="component" value="Chromosome"/>
</dbReference>
<dbReference type="GO" id="GO:0005737">
    <property type="term" value="C:cytoplasm"/>
    <property type="evidence" value="ECO:0007669"/>
    <property type="project" value="UniProtKB-SubCell"/>
</dbReference>
<dbReference type="GO" id="GO:0004134">
    <property type="term" value="F:4-alpha-glucanotransferase activity"/>
    <property type="evidence" value="ECO:0007669"/>
    <property type="project" value="UniProtKB-EC"/>
</dbReference>
<dbReference type="GO" id="GO:0005975">
    <property type="term" value="P:carbohydrate metabolic process"/>
    <property type="evidence" value="ECO:0007669"/>
    <property type="project" value="InterPro"/>
</dbReference>
<dbReference type="FunFam" id="3.20.20.80:FF:000082">
    <property type="entry name" value="4-alpha-glucanotransferase"/>
    <property type="match status" value="1"/>
</dbReference>
<dbReference type="Gene3D" id="3.20.20.80">
    <property type="entry name" value="Glycosidases"/>
    <property type="match status" value="1"/>
</dbReference>
<dbReference type="InterPro" id="IPR003385">
    <property type="entry name" value="Glyco_hydro_77"/>
</dbReference>
<dbReference type="InterPro" id="IPR017853">
    <property type="entry name" value="Glycoside_hydrolase_SF"/>
</dbReference>
<dbReference type="InterPro" id="IPR048458">
    <property type="entry name" value="MalQ_N"/>
</dbReference>
<dbReference type="NCBIfam" id="TIGR00217">
    <property type="entry name" value="malQ"/>
    <property type="match status" value="1"/>
</dbReference>
<dbReference type="PANTHER" id="PTHR32438">
    <property type="entry name" value="4-ALPHA-GLUCANOTRANSFERASE DPE1, CHLOROPLASTIC/AMYLOPLASTIC"/>
    <property type="match status" value="1"/>
</dbReference>
<dbReference type="PANTHER" id="PTHR32438:SF5">
    <property type="entry name" value="4-ALPHA-GLUCANOTRANSFERASE DPE1, CHLOROPLASTIC_AMYLOPLASTIC"/>
    <property type="match status" value="1"/>
</dbReference>
<dbReference type="Pfam" id="PF02446">
    <property type="entry name" value="Glyco_hydro_77"/>
    <property type="match status" value="1"/>
</dbReference>
<dbReference type="Pfam" id="PF21226">
    <property type="entry name" value="MalQ_N"/>
    <property type="match status" value="1"/>
</dbReference>
<dbReference type="SUPFAM" id="SSF51445">
    <property type="entry name" value="(Trans)glycosidases"/>
    <property type="match status" value="1"/>
</dbReference>
<comment type="catalytic activity">
    <reaction>
        <text>Transfers a segment of a (1-&gt;4)-alpha-D-glucan to a new position in an acceptor, which may be glucose or a (1-&gt;4)-alpha-D-glucan.</text>
        <dbReference type="EC" id="2.4.1.25"/>
    </reaction>
</comment>
<comment type="subcellular location">
    <subcellularLocation>
        <location evidence="1">Cytoplasm</location>
    </subcellularLocation>
</comment>
<comment type="similarity">
    <text evidence="2">Belongs to the disproportionating enzyme family.</text>
</comment>
<protein>
    <recommendedName>
        <fullName>4-alpha-glucanotransferase</fullName>
        <ecNumber>2.4.1.25</ecNumber>
    </recommendedName>
    <alternativeName>
        <fullName>Amylomaltase</fullName>
    </alternativeName>
    <alternativeName>
        <fullName>Disproportionating enzyme</fullName>
        <shortName>D-enzyme</shortName>
    </alternativeName>
</protein>
<organism>
    <name type="scientific">Mycobacterium tuberculosis (strain CDC 1551 / Oshkosh)</name>
    <dbReference type="NCBI Taxonomy" id="83331"/>
    <lineage>
        <taxon>Bacteria</taxon>
        <taxon>Bacillati</taxon>
        <taxon>Actinomycetota</taxon>
        <taxon>Actinomycetes</taxon>
        <taxon>Mycobacteriales</taxon>
        <taxon>Mycobacteriaceae</taxon>
        <taxon>Mycobacterium</taxon>
        <taxon>Mycobacterium tuberculosis complex</taxon>
    </lineage>
</organism>
<keyword id="KW-0119">Carbohydrate metabolism</keyword>
<keyword id="KW-0963">Cytoplasm</keyword>
<keyword id="KW-0328">Glycosyltransferase</keyword>
<keyword id="KW-1185">Reference proteome</keyword>
<keyword id="KW-0808">Transferase</keyword>
<evidence type="ECO:0000250" key="1"/>
<evidence type="ECO:0000305" key="2"/>
<feature type="chain" id="PRO_0000427729" description="4-alpha-glucanotransferase">
    <location>
        <begin position="1"/>
        <end position="724"/>
    </location>
</feature>
<gene>
    <name type="primary">malQ</name>
    <name type="ordered locus">MT1831</name>
</gene>
<proteinExistence type="inferred from homology"/>
<reference key="1">
    <citation type="journal article" date="2002" name="J. Bacteriol.">
        <title>Whole-genome comparison of Mycobacterium tuberculosis clinical and laboratory strains.</title>
        <authorList>
            <person name="Fleischmann R.D."/>
            <person name="Alland D."/>
            <person name="Eisen J.A."/>
            <person name="Carpenter L."/>
            <person name="White O."/>
            <person name="Peterson J.D."/>
            <person name="DeBoy R.T."/>
            <person name="Dodson R.J."/>
            <person name="Gwinn M.L."/>
            <person name="Haft D.H."/>
            <person name="Hickey E.K."/>
            <person name="Kolonay J.F."/>
            <person name="Nelson W.C."/>
            <person name="Umayam L.A."/>
            <person name="Ermolaeva M.D."/>
            <person name="Salzberg S.L."/>
            <person name="Delcher A."/>
            <person name="Utterback T.R."/>
            <person name="Weidman J.F."/>
            <person name="Khouri H.M."/>
            <person name="Gill J."/>
            <person name="Mikula A."/>
            <person name="Bishai W."/>
            <person name="Jacobs W.R. Jr."/>
            <person name="Venter J.C."/>
            <person name="Fraser C.M."/>
        </authorList>
    </citation>
    <scope>NUCLEOTIDE SEQUENCE [LARGE SCALE GENOMIC DNA]</scope>
    <source>
        <strain>CDC 1551 / Oshkosh</strain>
    </source>
</reference>
<sequence length="724" mass="79745">MTELAPSLVELARRFGIATEYTDWTGRQVLVSEATLVAALAALGVPAQTEQQRNDALAAQLRSYWARPLPATIVMRAGEQTQFRVHVTDGAPADVWLQLEDGTTRAEVVQVDNFTPPFDLDGRWIGEASFVLPADLPLGYHRVNLRSGDSQASAAVVVTPDWLGLPDKLAGRRAWGLAVQLYSVRSRQSWGIGDLTDLANLALWSASAHGAGYVLVNPLHAATLPGPAGRSKPIEPSPYLPTSRRFVNPLYLRVEAIPELVDLPKRGRVQRLRTNVQQHADQLDTIDRDSAWAAKRAALKLVHRVPRSAGRELAYAAFRTREGRALDDFATWCALAETYGDDWHRWPKSLRHPDASGVADFVDKHADAVDFHRWLQWQLDEQLASAQSQALRAGMSLGIMADLAVGVHPNGADAWALQDVLAQGVTAGAPPDEFNQLGQDWSQPPWRPDRLAEQEYRPFRALIQAALRHAGAVRIDHIIGLFRLWWIPDGAPPTQGTYVRYDHDAMIGIVALEAHRAGAVVVGEDLGTVEPWVRDYLLLRGLLGTSILWFEQDRDCGPAGTPLPAERWREYCLSSVTTHDLPPTAGYLAGDQVRLRESLGLLTNPVEAELESARADRAAWMAELRRVGLLADGAEPDSEEAVLALYRYLGRTPSRLLAVALTDAVGDRRTQNQPGTTDEYPNWRVPLTGPDGQPMLLEDIFTDRRAATLAEAVRAATTSPMSCW</sequence>
<accession>P9WK22</accession>
<accession>L0TAL4</accession>
<accession>O53932</accession>
<accession>P65336</accession>
<name>MALQ_MYCTO</name>